<name>SLMA_VIBC1</name>
<proteinExistence type="inferred from homology"/>
<reference key="1">
    <citation type="submission" date="2007-08" db="EMBL/GenBank/DDBJ databases">
        <authorList>
            <consortium name="The Vibrio harveyi Genome Sequencing Project"/>
            <person name="Bassler B."/>
            <person name="Clifton S.W."/>
            <person name="Fulton L."/>
            <person name="Delehaunty K."/>
            <person name="Fronick C."/>
            <person name="Harrison M."/>
            <person name="Markivic C."/>
            <person name="Fulton R."/>
            <person name="Tin-Wollam A.-M."/>
            <person name="Shah N."/>
            <person name="Pepin K."/>
            <person name="Nash W."/>
            <person name="Thiruvilangam P."/>
            <person name="Bhonagiri V."/>
            <person name="Waters C."/>
            <person name="Tu K.C."/>
            <person name="Irgon J."/>
            <person name="Wilson R.K."/>
        </authorList>
    </citation>
    <scope>NUCLEOTIDE SEQUENCE [LARGE SCALE GENOMIC DNA]</scope>
    <source>
        <strain>ATCC BAA-1116 / BB120</strain>
    </source>
</reference>
<feature type="chain" id="PRO_1000070537" description="Nucleoid occlusion factor SlmA">
    <location>
        <begin position="1"/>
        <end position="196"/>
    </location>
</feature>
<feature type="domain" description="HTH tetR-type" evidence="1">
    <location>
        <begin position="7"/>
        <end position="68"/>
    </location>
</feature>
<feature type="DNA-binding region" description="H-T-H motif" evidence="1">
    <location>
        <begin position="31"/>
        <end position="50"/>
    </location>
</feature>
<feature type="coiled-coil region" evidence="1">
    <location>
        <begin position="110"/>
        <end position="142"/>
    </location>
</feature>
<protein>
    <recommendedName>
        <fullName evidence="1">Nucleoid occlusion factor SlmA</fullName>
    </recommendedName>
</protein>
<dbReference type="EMBL" id="CP000789">
    <property type="protein sequence ID" value="ABU69653.1"/>
    <property type="molecule type" value="Genomic_DNA"/>
</dbReference>
<dbReference type="RefSeq" id="WP_012126810.1">
    <property type="nucleotide sequence ID" value="NC_022269.1"/>
</dbReference>
<dbReference type="SMR" id="A7MSP5"/>
<dbReference type="KEGG" id="vha:VIBHAR_00651"/>
<dbReference type="PATRIC" id="fig|338187.25.peg.1964"/>
<dbReference type="Proteomes" id="UP000008152">
    <property type="component" value="Chromosome I"/>
</dbReference>
<dbReference type="GO" id="GO:0043590">
    <property type="term" value="C:bacterial nucleoid"/>
    <property type="evidence" value="ECO:0007669"/>
    <property type="project" value="UniProtKB-UniRule"/>
</dbReference>
<dbReference type="GO" id="GO:0005737">
    <property type="term" value="C:cytoplasm"/>
    <property type="evidence" value="ECO:0007669"/>
    <property type="project" value="UniProtKB-UniRule"/>
</dbReference>
<dbReference type="GO" id="GO:0003700">
    <property type="term" value="F:DNA-binding transcription factor activity"/>
    <property type="evidence" value="ECO:0007669"/>
    <property type="project" value="TreeGrafter"/>
</dbReference>
<dbReference type="GO" id="GO:0000976">
    <property type="term" value="F:transcription cis-regulatory region binding"/>
    <property type="evidence" value="ECO:0007669"/>
    <property type="project" value="TreeGrafter"/>
</dbReference>
<dbReference type="GO" id="GO:0051301">
    <property type="term" value="P:cell division"/>
    <property type="evidence" value="ECO:0007669"/>
    <property type="project" value="UniProtKB-KW"/>
</dbReference>
<dbReference type="GO" id="GO:0010974">
    <property type="term" value="P:negative regulation of division septum assembly"/>
    <property type="evidence" value="ECO:0007669"/>
    <property type="project" value="InterPro"/>
</dbReference>
<dbReference type="FunFam" id="1.10.357.10:FF:000002">
    <property type="entry name" value="Nucleoid occlusion factor SlmA"/>
    <property type="match status" value="1"/>
</dbReference>
<dbReference type="Gene3D" id="1.10.357.10">
    <property type="entry name" value="Tetracycline Repressor, domain 2"/>
    <property type="match status" value="1"/>
</dbReference>
<dbReference type="HAMAP" id="MF_01839">
    <property type="entry name" value="NO_factor_SlmA"/>
    <property type="match status" value="1"/>
</dbReference>
<dbReference type="InterPro" id="IPR009057">
    <property type="entry name" value="Homeodomain-like_sf"/>
</dbReference>
<dbReference type="InterPro" id="IPR050109">
    <property type="entry name" value="HTH-type_TetR-like_transc_reg"/>
</dbReference>
<dbReference type="InterPro" id="IPR001647">
    <property type="entry name" value="HTH_TetR"/>
</dbReference>
<dbReference type="InterPro" id="IPR023769">
    <property type="entry name" value="NO_SlmA"/>
</dbReference>
<dbReference type="InterPro" id="IPR054580">
    <property type="entry name" value="SlmA-like_C"/>
</dbReference>
<dbReference type="InterPro" id="IPR036271">
    <property type="entry name" value="Tet_transcr_reg_TetR-rel_C_sf"/>
</dbReference>
<dbReference type="NCBIfam" id="NF007015">
    <property type="entry name" value="PRK09480.1"/>
    <property type="match status" value="1"/>
</dbReference>
<dbReference type="PANTHER" id="PTHR30055">
    <property type="entry name" value="HTH-TYPE TRANSCRIPTIONAL REGULATOR RUTR"/>
    <property type="match status" value="1"/>
</dbReference>
<dbReference type="PANTHER" id="PTHR30055:SF183">
    <property type="entry name" value="NUCLEOID OCCLUSION FACTOR SLMA"/>
    <property type="match status" value="1"/>
</dbReference>
<dbReference type="Pfam" id="PF22276">
    <property type="entry name" value="SlmA-like_C"/>
    <property type="match status" value="1"/>
</dbReference>
<dbReference type="Pfam" id="PF00440">
    <property type="entry name" value="TetR_N"/>
    <property type="match status" value="1"/>
</dbReference>
<dbReference type="SUPFAM" id="SSF46689">
    <property type="entry name" value="Homeodomain-like"/>
    <property type="match status" value="1"/>
</dbReference>
<dbReference type="SUPFAM" id="SSF48498">
    <property type="entry name" value="Tetracyclin repressor-like, C-terminal domain"/>
    <property type="match status" value="1"/>
</dbReference>
<dbReference type="PROSITE" id="PS50977">
    <property type="entry name" value="HTH_TETR_2"/>
    <property type="match status" value="1"/>
</dbReference>
<keyword id="KW-0131">Cell cycle</keyword>
<keyword id="KW-0132">Cell division</keyword>
<keyword id="KW-0175">Coiled coil</keyword>
<keyword id="KW-0963">Cytoplasm</keyword>
<keyword id="KW-0238">DNA-binding</keyword>
<accession>A7MSP5</accession>
<organism>
    <name type="scientific">Vibrio campbellii (strain ATCC BAA-1116)</name>
    <dbReference type="NCBI Taxonomy" id="2902295"/>
    <lineage>
        <taxon>Bacteria</taxon>
        <taxon>Pseudomonadati</taxon>
        <taxon>Pseudomonadota</taxon>
        <taxon>Gammaproteobacteria</taxon>
        <taxon>Vibrionales</taxon>
        <taxon>Vibrionaceae</taxon>
        <taxon>Vibrio</taxon>
    </lineage>
</organism>
<sequence>MAGSKKTNRREEILQALAQMLESTEGASRITTAKLAKQVGVSEAALYRHFPSKARMFEGLIEFIEEALMTRINRILDDEKDTLERIRMVMHLILAFSERNPGLTRILSGHALMFENERLRDRINQLFERIETQLRQILRERKIREGKSFPVEERILAAQILGQVEGSLNRFVRSDFKYQPTANFDEYWALLSAQIK</sequence>
<comment type="function">
    <text evidence="1">Required for nucleoid occlusion (NO) phenomenon, which prevents Z-ring formation and cell division over the nucleoid. Acts as a DNA-associated cell division inhibitor that binds simultaneously chromosomal DNA and FtsZ, and disrupts the assembly of FtsZ polymers. SlmA-DNA-binding sequences (SBS) are dispersed on non-Ter regions of the chromosome, preventing FtsZ polymerization at these regions.</text>
</comment>
<comment type="subunit">
    <text evidence="1">Homodimer. Interacts with FtsZ.</text>
</comment>
<comment type="subcellular location">
    <subcellularLocation>
        <location evidence="1">Cytoplasm</location>
        <location evidence="1">Nucleoid</location>
    </subcellularLocation>
</comment>
<comment type="similarity">
    <text evidence="1">Belongs to the nucleoid occlusion factor SlmA family.</text>
</comment>
<evidence type="ECO:0000255" key="1">
    <source>
        <dbReference type="HAMAP-Rule" id="MF_01839"/>
    </source>
</evidence>
<gene>
    <name evidence="1" type="primary">slmA</name>
    <name type="ordered locus">VIBHAR_00651</name>
</gene>